<organism>
    <name type="scientific">Staphylococcus aureus (strain USA300 / TCH1516)</name>
    <dbReference type="NCBI Taxonomy" id="451516"/>
    <lineage>
        <taxon>Bacteria</taxon>
        <taxon>Bacillati</taxon>
        <taxon>Bacillota</taxon>
        <taxon>Bacilli</taxon>
        <taxon>Bacillales</taxon>
        <taxon>Staphylococcaceae</taxon>
        <taxon>Staphylococcus</taxon>
    </lineage>
</organism>
<name>SYS_STAAT</name>
<evidence type="ECO:0000255" key="1">
    <source>
        <dbReference type="HAMAP-Rule" id="MF_00176"/>
    </source>
</evidence>
<feature type="chain" id="PRO_1000077220" description="Serine--tRNA ligase">
    <location>
        <begin position="1"/>
        <end position="428"/>
    </location>
</feature>
<feature type="binding site" evidence="1">
    <location>
        <begin position="231"/>
        <end position="233"/>
    </location>
    <ligand>
        <name>L-serine</name>
        <dbReference type="ChEBI" id="CHEBI:33384"/>
    </ligand>
</feature>
<feature type="binding site" evidence="1">
    <location>
        <begin position="262"/>
        <end position="264"/>
    </location>
    <ligand>
        <name>ATP</name>
        <dbReference type="ChEBI" id="CHEBI:30616"/>
    </ligand>
</feature>
<feature type="binding site" evidence="1">
    <location>
        <position position="285"/>
    </location>
    <ligand>
        <name>L-serine</name>
        <dbReference type="ChEBI" id="CHEBI:33384"/>
    </ligand>
</feature>
<feature type="binding site" evidence="1">
    <location>
        <begin position="349"/>
        <end position="352"/>
    </location>
    <ligand>
        <name>ATP</name>
        <dbReference type="ChEBI" id="CHEBI:30616"/>
    </ligand>
</feature>
<feature type="binding site" evidence="1">
    <location>
        <position position="385"/>
    </location>
    <ligand>
        <name>L-serine</name>
        <dbReference type="ChEBI" id="CHEBI:33384"/>
    </ligand>
</feature>
<sequence length="428" mass="48640">MLDIRLFRNEPDTVKSKIELRGDDPKVVDEILELDEQRRKLISATEEMKARRNKVSEEIALKKRNKENADDVIAEMRTLGDDIKEKDSQLNEIDNKMTGILCRIPNLISDDVPQGESDEDNVEVKKWGTPREFSFEPKAHWDIVEELKMADFDRAAKVSGARFVYLTNEGAQLERALMNYMITKHTTQHGYTEMMVPQLVNADTMYGTGQLPKFEEDLFKVEKEGLYTIPTAEVPLTNFYRNEIIQPGVLPEKFTGQSACFRSEAGSAGRDTRGLIRLHQFDKVEMVRFEQPEDSWNALEEMTTNAEAILEELGLPYRRVILCTGDIGFSASKTYDLEVWLPSYNDYKEISSCSNCTDFQARRANIRFKRDKAAKPELAHTLNGSGLAVGRTFAAIVENYQNEDGTVTIPEALVPFMGGKTQISKPVK</sequence>
<accession>A8YYT2</accession>
<comment type="function">
    <text evidence="1">Catalyzes the attachment of serine to tRNA(Ser). Is also able to aminoacylate tRNA(Sec) with serine, to form the misacylated tRNA L-seryl-tRNA(Sec), which will be further converted into selenocysteinyl-tRNA(Sec).</text>
</comment>
<comment type="catalytic activity">
    <reaction evidence="1">
        <text>tRNA(Ser) + L-serine + ATP = L-seryl-tRNA(Ser) + AMP + diphosphate + H(+)</text>
        <dbReference type="Rhea" id="RHEA:12292"/>
        <dbReference type="Rhea" id="RHEA-COMP:9669"/>
        <dbReference type="Rhea" id="RHEA-COMP:9703"/>
        <dbReference type="ChEBI" id="CHEBI:15378"/>
        <dbReference type="ChEBI" id="CHEBI:30616"/>
        <dbReference type="ChEBI" id="CHEBI:33019"/>
        <dbReference type="ChEBI" id="CHEBI:33384"/>
        <dbReference type="ChEBI" id="CHEBI:78442"/>
        <dbReference type="ChEBI" id="CHEBI:78533"/>
        <dbReference type="ChEBI" id="CHEBI:456215"/>
        <dbReference type="EC" id="6.1.1.11"/>
    </reaction>
</comment>
<comment type="catalytic activity">
    <reaction evidence="1">
        <text>tRNA(Sec) + L-serine + ATP = L-seryl-tRNA(Sec) + AMP + diphosphate + H(+)</text>
        <dbReference type="Rhea" id="RHEA:42580"/>
        <dbReference type="Rhea" id="RHEA-COMP:9742"/>
        <dbReference type="Rhea" id="RHEA-COMP:10128"/>
        <dbReference type="ChEBI" id="CHEBI:15378"/>
        <dbReference type="ChEBI" id="CHEBI:30616"/>
        <dbReference type="ChEBI" id="CHEBI:33019"/>
        <dbReference type="ChEBI" id="CHEBI:33384"/>
        <dbReference type="ChEBI" id="CHEBI:78442"/>
        <dbReference type="ChEBI" id="CHEBI:78533"/>
        <dbReference type="ChEBI" id="CHEBI:456215"/>
        <dbReference type="EC" id="6.1.1.11"/>
    </reaction>
</comment>
<comment type="pathway">
    <text evidence="1">Aminoacyl-tRNA biosynthesis; selenocysteinyl-tRNA(Sec) biosynthesis; L-seryl-tRNA(Sec) from L-serine and tRNA(Sec): step 1/1.</text>
</comment>
<comment type="subunit">
    <text evidence="1">Homodimer. The tRNA molecule binds across the dimer.</text>
</comment>
<comment type="subcellular location">
    <subcellularLocation>
        <location evidence="1">Cytoplasm</location>
    </subcellularLocation>
</comment>
<comment type="domain">
    <text evidence="1">Consists of two distinct domains, a catalytic core and a N-terminal extension that is involved in tRNA binding.</text>
</comment>
<comment type="similarity">
    <text evidence="1">Belongs to the class-II aminoacyl-tRNA synthetase family. Type-1 seryl-tRNA synthetase subfamily.</text>
</comment>
<gene>
    <name evidence="1" type="primary">serS</name>
    <name type="ordered locus">USA300HOU_0009</name>
</gene>
<protein>
    <recommendedName>
        <fullName evidence="1">Serine--tRNA ligase</fullName>
        <ecNumber evidence="1">6.1.1.11</ecNumber>
    </recommendedName>
    <alternativeName>
        <fullName evidence="1">Seryl-tRNA synthetase</fullName>
        <shortName evidence="1">SerRS</shortName>
    </alternativeName>
    <alternativeName>
        <fullName evidence="1">Seryl-tRNA(Ser/Sec) synthetase</fullName>
    </alternativeName>
</protein>
<reference key="1">
    <citation type="journal article" date="2007" name="BMC Microbiol.">
        <title>Subtle genetic changes enhance virulence of methicillin resistant and sensitive Staphylococcus aureus.</title>
        <authorList>
            <person name="Highlander S.K."/>
            <person name="Hulten K.G."/>
            <person name="Qin X."/>
            <person name="Jiang H."/>
            <person name="Yerrapragada S."/>
            <person name="Mason E.O. Jr."/>
            <person name="Shang Y."/>
            <person name="Williams T.M."/>
            <person name="Fortunov R.M."/>
            <person name="Liu Y."/>
            <person name="Igboeli O."/>
            <person name="Petrosino J."/>
            <person name="Tirumalai M."/>
            <person name="Uzman A."/>
            <person name="Fox G.E."/>
            <person name="Cardenas A.M."/>
            <person name="Muzny D.M."/>
            <person name="Hemphill L."/>
            <person name="Ding Y."/>
            <person name="Dugan S."/>
            <person name="Blyth P.R."/>
            <person name="Buhay C.J."/>
            <person name="Dinh H.H."/>
            <person name="Hawes A.C."/>
            <person name="Holder M."/>
            <person name="Kovar C.L."/>
            <person name="Lee S.L."/>
            <person name="Liu W."/>
            <person name="Nazareth L.V."/>
            <person name="Wang Q."/>
            <person name="Zhou J."/>
            <person name="Kaplan S.L."/>
            <person name="Weinstock G.M."/>
        </authorList>
    </citation>
    <scope>NUCLEOTIDE SEQUENCE [LARGE SCALE GENOMIC DNA]</scope>
    <source>
        <strain>USA300 / TCH1516</strain>
    </source>
</reference>
<proteinExistence type="inferred from homology"/>
<dbReference type="EC" id="6.1.1.11" evidence="1"/>
<dbReference type="EMBL" id="CP000730">
    <property type="protein sequence ID" value="ABX28055.1"/>
    <property type="molecule type" value="Genomic_DNA"/>
</dbReference>
<dbReference type="RefSeq" id="WP_000884334.1">
    <property type="nucleotide sequence ID" value="NC_010079.1"/>
</dbReference>
<dbReference type="SMR" id="A8YYT2"/>
<dbReference type="KEGG" id="sax:USA300HOU_0009"/>
<dbReference type="HOGENOM" id="CLU_023797_1_1_9"/>
<dbReference type="UniPathway" id="UPA00906">
    <property type="reaction ID" value="UER00895"/>
</dbReference>
<dbReference type="GO" id="GO:0005737">
    <property type="term" value="C:cytoplasm"/>
    <property type="evidence" value="ECO:0007669"/>
    <property type="project" value="UniProtKB-SubCell"/>
</dbReference>
<dbReference type="GO" id="GO:0005524">
    <property type="term" value="F:ATP binding"/>
    <property type="evidence" value="ECO:0007669"/>
    <property type="project" value="UniProtKB-UniRule"/>
</dbReference>
<dbReference type="GO" id="GO:0140096">
    <property type="term" value="F:catalytic activity, acting on a protein"/>
    <property type="evidence" value="ECO:0007669"/>
    <property type="project" value="UniProtKB-ARBA"/>
</dbReference>
<dbReference type="GO" id="GO:0004828">
    <property type="term" value="F:serine-tRNA ligase activity"/>
    <property type="evidence" value="ECO:0007669"/>
    <property type="project" value="UniProtKB-UniRule"/>
</dbReference>
<dbReference type="GO" id="GO:0016740">
    <property type="term" value="F:transferase activity"/>
    <property type="evidence" value="ECO:0007669"/>
    <property type="project" value="UniProtKB-ARBA"/>
</dbReference>
<dbReference type="GO" id="GO:0016260">
    <property type="term" value="P:selenocysteine biosynthetic process"/>
    <property type="evidence" value="ECO:0007669"/>
    <property type="project" value="UniProtKB-UniRule"/>
</dbReference>
<dbReference type="GO" id="GO:0006434">
    <property type="term" value="P:seryl-tRNA aminoacylation"/>
    <property type="evidence" value="ECO:0007669"/>
    <property type="project" value="UniProtKB-UniRule"/>
</dbReference>
<dbReference type="CDD" id="cd00770">
    <property type="entry name" value="SerRS_core"/>
    <property type="match status" value="1"/>
</dbReference>
<dbReference type="Gene3D" id="3.30.930.10">
    <property type="entry name" value="Bira Bifunctional Protein, Domain 2"/>
    <property type="match status" value="1"/>
</dbReference>
<dbReference type="Gene3D" id="1.10.287.40">
    <property type="entry name" value="Serine-tRNA synthetase, tRNA binding domain"/>
    <property type="match status" value="1"/>
</dbReference>
<dbReference type="HAMAP" id="MF_00176">
    <property type="entry name" value="Ser_tRNA_synth_type1"/>
    <property type="match status" value="1"/>
</dbReference>
<dbReference type="InterPro" id="IPR002314">
    <property type="entry name" value="aa-tRNA-synt_IIb"/>
</dbReference>
<dbReference type="InterPro" id="IPR006195">
    <property type="entry name" value="aa-tRNA-synth_II"/>
</dbReference>
<dbReference type="InterPro" id="IPR045864">
    <property type="entry name" value="aa-tRNA-synth_II/BPL/LPL"/>
</dbReference>
<dbReference type="InterPro" id="IPR002317">
    <property type="entry name" value="Ser-tRNA-ligase_type_1"/>
</dbReference>
<dbReference type="InterPro" id="IPR015866">
    <property type="entry name" value="Ser-tRNA-synth_1_N"/>
</dbReference>
<dbReference type="InterPro" id="IPR042103">
    <property type="entry name" value="SerRS_1_N_sf"/>
</dbReference>
<dbReference type="InterPro" id="IPR033729">
    <property type="entry name" value="SerRS_core"/>
</dbReference>
<dbReference type="InterPro" id="IPR010978">
    <property type="entry name" value="tRNA-bd_arm"/>
</dbReference>
<dbReference type="NCBIfam" id="TIGR00414">
    <property type="entry name" value="serS"/>
    <property type="match status" value="1"/>
</dbReference>
<dbReference type="PANTHER" id="PTHR43697:SF1">
    <property type="entry name" value="SERINE--TRNA LIGASE"/>
    <property type="match status" value="1"/>
</dbReference>
<dbReference type="PANTHER" id="PTHR43697">
    <property type="entry name" value="SERYL-TRNA SYNTHETASE"/>
    <property type="match status" value="1"/>
</dbReference>
<dbReference type="Pfam" id="PF02403">
    <property type="entry name" value="Seryl_tRNA_N"/>
    <property type="match status" value="1"/>
</dbReference>
<dbReference type="Pfam" id="PF00587">
    <property type="entry name" value="tRNA-synt_2b"/>
    <property type="match status" value="1"/>
</dbReference>
<dbReference type="PIRSF" id="PIRSF001529">
    <property type="entry name" value="Ser-tRNA-synth_IIa"/>
    <property type="match status" value="1"/>
</dbReference>
<dbReference type="PRINTS" id="PR00981">
    <property type="entry name" value="TRNASYNTHSER"/>
</dbReference>
<dbReference type="SUPFAM" id="SSF55681">
    <property type="entry name" value="Class II aaRS and biotin synthetases"/>
    <property type="match status" value="1"/>
</dbReference>
<dbReference type="SUPFAM" id="SSF46589">
    <property type="entry name" value="tRNA-binding arm"/>
    <property type="match status" value="1"/>
</dbReference>
<dbReference type="PROSITE" id="PS50862">
    <property type="entry name" value="AA_TRNA_LIGASE_II"/>
    <property type="match status" value="1"/>
</dbReference>
<keyword id="KW-0030">Aminoacyl-tRNA synthetase</keyword>
<keyword id="KW-0067">ATP-binding</keyword>
<keyword id="KW-0963">Cytoplasm</keyword>
<keyword id="KW-0436">Ligase</keyword>
<keyword id="KW-0547">Nucleotide-binding</keyword>
<keyword id="KW-0648">Protein biosynthesis</keyword>